<comment type="subcellular location">
    <subcellularLocation>
        <location>Cell inner membrane</location>
        <topology>Multi-pass membrane protein</topology>
    </subcellularLocation>
</comment>
<comment type="similarity">
    <text evidence="3">Belongs to the major facilitator superfamily.</text>
</comment>
<accession>P43531</accession>
<accession>P76886</accession>
<accession>P77705</accession>
<reference key="1">
    <citation type="journal article" date="1996" name="DNA Res.">
        <title>A 570-kb DNA sequence of the Escherichia coli K-12 genome corresponding to the 28.0-40.1 min region on the linkage map.</title>
        <authorList>
            <person name="Aiba H."/>
            <person name="Baba T."/>
            <person name="Fujita K."/>
            <person name="Hayashi K."/>
            <person name="Inada T."/>
            <person name="Isono K."/>
            <person name="Itoh T."/>
            <person name="Kasai H."/>
            <person name="Kashimoto K."/>
            <person name="Kimura S."/>
            <person name="Kitakawa M."/>
            <person name="Kitagawa M."/>
            <person name="Makino K."/>
            <person name="Miki T."/>
            <person name="Mizobuchi K."/>
            <person name="Mori H."/>
            <person name="Mori T."/>
            <person name="Motomura K."/>
            <person name="Nakade S."/>
            <person name="Nakamura Y."/>
            <person name="Nashimoto H."/>
            <person name="Nishio Y."/>
            <person name="Oshima T."/>
            <person name="Saito N."/>
            <person name="Sampei G."/>
            <person name="Seki Y."/>
            <person name="Sivasundaram S."/>
            <person name="Tagami H."/>
            <person name="Takeda J."/>
            <person name="Takemoto K."/>
            <person name="Takeuchi Y."/>
            <person name="Wada C."/>
            <person name="Yamamoto Y."/>
            <person name="Horiuchi T."/>
        </authorList>
    </citation>
    <scope>NUCLEOTIDE SEQUENCE [LARGE SCALE GENOMIC DNA]</scope>
    <source>
        <strain>K12 / W3110 / ATCC 27325 / DSM 5911</strain>
    </source>
</reference>
<reference key="2">
    <citation type="journal article" date="1997" name="Science">
        <title>The complete genome sequence of Escherichia coli K-12.</title>
        <authorList>
            <person name="Blattner F.R."/>
            <person name="Plunkett G. III"/>
            <person name="Bloch C.A."/>
            <person name="Perna N.T."/>
            <person name="Burland V."/>
            <person name="Riley M."/>
            <person name="Collado-Vides J."/>
            <person name="Glasner J.D."/>
            <person name="Rode C.K."/>
            <person name="Mayhew G.F."/>
            <person name="Gregor J."/>
            <person name="Davis N.W."/>
            <person name="Kirkpatrick H.A."/>
            <person name="Goeden M.A."/>
            <person name="Rose D.J."/>
            <person name="Mau B."/>
            <person name="Shao Y."/>
        </authorList>
    </citation>
    <scope>NUCLEOTIDE SEQUENCE [LARGE SCALE GENOMIC DNA]</scope>
    <source>
        <strain>K12 / MG1655 / ATCC 47076</strain>
    </source>
</reference>
<reference key="3">
    <citation type="journal article" date="2006" name="Mol. Syst. Biol.">
        <title>Highly accurate genome sequences of Escherichia coli K-12 strains MG1655 and W3110.</title>
        <authorList>
            <person name="Hayashi K."/>
            <person name="Morooka N."/>
            <person name="Yamamoto Y."/>
            <person name="Fujita K."/>
            <person name="Isono K."/>
            <person name="Choi S."/>
            <person name="Ohtsubo E."/>
            <person name="Baba T."/>
            <person name="Wanner B.L."/>
            <person name="Mori H."/>
            <person name="Horiuchi T."/>
        </authorList>
    </citation>
    <scope>NUCLEOTIDE SEQUENCE [LARGE SCALE GENOMIC DNA]</scope>
    <source>
        <strain>K12 / W3110 / ATCC 27325 / DSM 5911</strain>
    </source>
</reference>
<reference key="4">
    <citation type="submission" date="2001-10" db="EMBL/GenBank/DDBJ databases">
        <authorList>
            <person name="Jakubcionyte E."/>
            <person name="Apirion D."/>
            <person name="Normark S."/>
        </authorList>
    </citation>
    <scope>NUCLEOTIDE SEQUENCE [GENOMIC DNA] OF 350-417</scope>
    <source>
        <strain>K12 / N2212</strain>
    </source>
</reference>
<reference key="5">
    <citation type="unpublished observations" date="1995-07">
        <authorList>
            <person name="Rudd K.E."/>
        </authorList>
    </citation>
    <scope>IDENTIFICATION</scope>
</reference>
<reference key="6">
    <citation type="journal article" date="2005" name="Science">
        <title>Global topology analysis of the Escherichia coli inner membrane proteome.</title>
        <authorList>
            <person name="Daley D.O."/>
            <person name="Rapp M."/>
            <person name="Granseth E."/>
            <person name="Melen K."/>
            <person name="Drew D."/>
            <person name="von Heijne G."/>
        </authorList>
    </citation>
    <scope>TOPOLOGY [LARGE SCALE ANALYSIS]</scope>
    <source>
        <strain>K12 / MG1655 / ATCC 47076</strain>
    </source>
</reference>
<feature type="chain" id="PRO_0000173411" description="Inner membrane transport protein YnfM">
    <location>
        <begin position="1"/>
        <end position="417"/>
    </location>
</feature>
<feature type="topological domain" description="Periplasmic" evidence="1">
    <location>
        <begin position="1"/>
        <end position="38"/>
    </location>
</feature>
<feature type="transmembrane region" description="Helical" evidence="1">
    <location>
        <begin position="39"/>
        <end position="59"/>
    </location>
</feature>
<feature type="topological domain" description="Cytoplasmic" evidence="1">
    <location>
        <begin position="60"/>
        <end position="73"/>
    </location>
</feature>
<feature type="transmembrane region" description="Helical" evidence="1">
    <location>
        <begin position="74"/>
        <end position="94"/>
    </location>
</feature>
<feature type="topological domain" description="Periplasmic" evidence="1">
    <location>
        <begin position="95"/>
        <end position="101"/>
    </location>
</feature>
<feature type="transmembrane region" description="Helical" evidence="1">
    <location>
        <begin position="102"/>
        <end position="122"/>
    </location>
</feature>
<feature type="topological domain" description="Cytoplasmic" evidence="1">
    <location>
        <begin position="123"/>
        <end position="125"/>
    </location>
</feature>
<feature type="transmembrane region" description="Helical" evidence="1">
    <location>
        <begin position="126"/>
        <end position="146"/>
    </location>
</feature>
<feature type="topological domain" description="Periplasmic" evidence="1">
    <location>
        <begin position="147"/>
        <end position="152"/>
    </location>
</feature>
<feature type="transmembrane region" description="Helical" evidence="1">
    <location>
        <begin position="153"/>
        <end position="173"/>
    </location>
</feature>
<feature type="topological domain" description="Cytoplasmic" evidence="1">
    <location>
        <begin position="174"/>
        <end position="190"/>
    </location>
</feature>
<feature type="transmembrane region" description="Helical" evidence="1">
    <location>
        <begin position="191"/>
        <end position="211"/>
    </location>
</feature>
<feature type="topological domain" description="Periplasmic" evidence="1">
    <location>
        <begin position="212"/>
        <end position="241"/>
    </location>
</feature>
<feature type="transmembrane region" description="Helical" evidence="1">
    <location>
        <begin position="242"/>
        <end position="262"/>
    </location>
</feature>
<feature type="topological domain" description="Cytoplasmic" evidence="1">
    <location>
        <begin position="263"/>
        <end position="264"/>
    </location>
</feature>
<feature type="transmembrane region" description="Helical" evidence="1">
    <location>
        <begin position="265"/>
        <end position="285"/>
    </location>
</feature>
<feature type="topological domain" description="Periplasmic" evidence="1">
    <location>
        <begin position="286"/>
        <end position="315"/>
    </location>
</feature>
<feature type="transmembrane region" description="Helical" evidence="1">
    <location>
        <begin position="316"/>
        <end position="336"/>
    </location>
</feature>
<feature type="topological domain" description="Cytoplasmic" evidence="1">
    <location>
        <begin position="337"/>
        <end position="364"/>
    </location>
</feature>
<feature type="transmembrane region" description="Helical" evidence="1">
    <location>
        <begin position="365"/>
        <end position="385"/>
    </location>
</feature>
<feature type="topological domain" description="Periplasmic" evidence="1">
    <location>
        <begin position="386"/>
        <end position="387"/>
    </location>
</feature>
<feature type="transmembrane region" description="Helical" evidence="1">
    <location>
        <begin position="388"/>
        <end position="408"/>
    </location>
</feature>
<feature type="topological domain" description="Cytoplasmic" evidence="1">
    <location>
        <begin position="409"/>
        <end position="417"/>
    </location>
</feature>
<feature type="region of interest" description="Disordered" evidence="2">
    <location>
        <begin position="1"/>
        <end position="22"/>
    </location>
</feature>
<evidence type="ECO:0000255" key="1"/>
<evidence type="ECO:0000256" key="2">
    <source>
        <dbReference type="SAM" id="MobiDB-lite"/>
    </source>
</evidence>
<evidence type="ECO:0000305" key="3"/>
<gene>
    <name type="primary">ynfM</name>
    <name type="synonym">yzyC</name>
    <name type="ordered locus">b1596</name>
    <name type="ordered locus">JW1588</name>
</gene>
<name>YNFM_ECOLI</name>
<sequence>MSRTTTVDGAPASDTDKQSISQPNQFIKRGTPQFMRVTLALFSAGLATFALLYCVQPILPVLSQEFGLTPANSSISLSISTAMLAIGLLFTGPLSDAIGRKPVMVTALLLASICTLLSTMMTSWHGILIMRALIGLSLSGVAAVGMTYLSEEIHPSFVAFSMGLYISGNSIGGMSGRLISGVFTDFFNWRIALAAIGCFALASALMFWKILPESRHFRPTSLRPKTLFINFRLHWRDRGLPLLFAEGFLLMGSFVTLFNYIGYRLMLSPWHVSQAVVGLLSLAYLTGTWSSPKAGTMTTRYGRGPVMLFSTGVMLFGLLMTLFSSLWLIFAGMLLFSAGFFAAHSVASSWIGPRAKRAKGQASSLYLFSYYLGSSIAGTLGGVFWHNYGWNGVGAFIALMLVIALLVGTRLHRRLHA</sequence>
<keyword id="KW-0997">Cell inner membrane</keyword>
<keyword id="KW-1003">Cell membrane</keyword>
<keyword id="KW-0472">Membrane</keyword>
<keyword id="KW-1185">Reference proteome</keyword>
<keyword id="KW-0812">Transmembrane</keyword>
<keyword id="KW-1133">Transmembrane helix</keyword>
<keyword id="KW-0813">Transport</keyword>
<proteinExistence type="evidence at protein level"/>
<organism>
    <name type="scientific">Escherichia coli (strain K12)</name>
    <dbReference type="NCBI Taxonomy" id="83333"/>
    <lineage>
        <taxon>Bacteria</taxon>
        <taxon>Pseudomonadati</taxon>
        <taxon>Pseudomonadota</taxon>
        <taxon>Gammaproteobacteria</taxon>
        <taxon>Enterobacterales</taxon>
        <taxon>Enterobacteriaceae</taxon>
        <taxon>Escherichia</taxon>
    </lineage>
</organism>
<protein>
    <recommendedName>
        <fullName>Inner membrane transport protein YnfM</fullName>
    </recommendedName>
</protein>
<dbReference type="EMBL" id="U00096">
    <property type="protein sequence ID" value="AAC74668.1"/>
    <property type="molecule type" value="Genomic_DNA"/>
</dbReference>
<dbReference type="EMBL" id="AP009048">
    <property type="protein sequence ID" value="BAA15330.1"/>
    <property type="molecule type" value="Genomic_DNA"/>
</dbReference>
<dbReference type="EMBL" id="AF405541">
    <property type="status" value="NOT_ANNOTATED_CDS"/>
    <property type="molecule type" value="Genomic_DNA"/>
</dbReference>
<dbReference type="PIR" id="F64915">
    <property type="entry name" value="F64915"/>
</dbReference>
<dbReference type="RefSeq" id="NP_416113.1">
    <property type="nucleotide sequence ID" value="NC_000913.3"/>
</dbReference>
<dbReference type="RefSeq" id="WP_000091840.1">
    <property type="nucleotide sequence ID" value="NZ_SSZK01000001.1"/>
</dbReference>
<dbReference type="SMR" id="P43531"/>
<dbReference type="BioGRID" id="4259121">
    <property type="interactions" value="157"/>
</dbReference>
<dbReference type="FunCoup" id="P43531">
    <property type="interactions" value="270"/>
</dbReference>
<dbReference type="STRING" id="511145.b1596"/>
<dbReference type="TCDB" id="2.A.1.36.1">
    <property type="family name" value="the major facilitator superfamily (mfs)"/>
</dbReference>
<dbReference type="PaxDb" id="511145-b1596"/>
<dbReference type="EnsemblBacteria" id="AAC74668">
    <property type="protein sequence ID" value="AAC74668"/>
    <property type="gene ID" value="b1596"/>
</dbReference>
<dbReference type="GeneID" id="946138"/>
<dbReference type="KEGG" id="ecj:JW1588"/>
<dbReference type="KEGG" id="eco:b1596"/>
<dbReference type="KEGG" id="ecoc:C3026_09190"/>
<dbReference type="PATRIC" id="fig|1411691.4.peg.666"/>
<dbReference type="EchoBASE" id="EB2785"/>
<dbReference type="eggNOG" id="COG2814">
    <property type="taxonomic scope" value="Bacteria"/>
</dbReference>
<dbReference type="HOGENOM" id="CLU_001265_19_3_6"/>
<dbReference type="InParanoid" id="P43531"/>
<dbReference type="OMA" id="YCVQPMM"/>
<dbReference type="OrthoDB" id="63984at2"/>
<dbReference type="PhylomeDB" id="P43531"/>
<dbReference type="BioCyc" id="EcoCyc:B1596-MONOMER"/>
<dbReference type="PRO" id="PR:P43531"/>
<dbReference type="Proteomes" id="UP000000625">
    <property type="component" value="Chromosome"/>
</dbReference>
<dbReference type="GO" id="GO:0005886">
    <property type="term" value="C:plasma membrane"/>
    <property type="evidence" value="ECO:0000314"/>
    <property type="project" value="EcoCyc"/>
</dbReference>
<dbReference type="GO" id="GO:0022857">
    <property type="term" value="F:transmembrane transporter activity"/>
    <property type="evidence" value="ECO:0007669"/>
    <property type="project" value="InterPro"/>
</dbReference>
<dbReference type="CDD" id="cd17324">
    <property type="entry name" value="MFS_NepI_like"/>
    <property type="match status" value="1"/>
</dbReference>
<dbReference type="FunFam" id="1.20.1250.20:FF:000071">
    <property type="entry name" value="Inner membrane transporter ynfM"/>
    <property type="match status" value="1"/>
</dbReference>
<dbReference type="Gene3D" id="1.20.1250.20">
    <property type="entry name" value="MFS general substrate transporter like domains"/>
    <property type="match status" value="1"/>
</dbReference>
<dbReference type="InterPro" id="IPR011701">
    <property type="entry name" value="MFS"/>
</dbReference>
<dbReference type="InterPro" id="IPR020846">
    <property type="entry name" value="MFS_dom"/>
</dbReference>
<dbReference type="InterPro" id="IPR036259">
    <property type="entry name" value="MFS_trans_sf"/>
</dbReference>
<dbReference type="InterPro" id="IPR005829">
    <property type="entry name" value="Sugar_transporter_CS"/>
</dbReference>
<dbReference type="PANTHER" id="PTHR43271">
    <property type="entry name" value="BLL2771 PROTEIN"/>
    <property type="match status" value="1"/>
</dbReference>
<dbReference type="PANTHER" id="PTHR43271:SF1">
    <property type="entry name" value="INNER MEMBRANE TRANSPORT PROTEIN YNFM"/>
    <property type="match status" value="1"/>
</dbReference>
<dbReference type="Pfam" id="PF07690">
    <property type="entry name" value="MFS_1"/>
    <property type="match status" value="2"/>
</dbReference>
<dbReference type="SUPFAM" id="SSF103473">
    <property type="entry name" value="MFS general substrate transporter"/>
    <property type="match status" value="1"/>
</dbReference>
<dbReference type="PROSITE" id="PS50850">
    <property type="entry name" value="MFS"/>
    <property type="match status" value="1"/>
</dbReference>
<dbReference type="PROSITE" id="PS00216">
    <property type="entry name" value="SUGAR_TRANSPORT_1"/>
    <property type="match status" value="1"/>
</dbReference>